<gene>
    <name type="primary">APOC1A</name>
</gene>
<accession>P0CE39</accession>
<keyword id="KW-0445">Lipid transport</keyword>
<keyword id="KW-1185">Reference proteome</keyword>
<keyword id="KW-0964">Secreted</keyword>
<keyword id="KW-0732">Signal</keyword>
<keyword id="KW-0813">Transport</keyword>
<evidence type="ECO:0000250" key="1">
    <source>
        <dbReference type="UniProtKB" id="P02654"/>
    </source>
</evidence>
<evidence type="ECO:0000250" key="2">
    <source>
        <dbReference type="UniProtKB" id="P33047"/>
    </source>
</evidence>
<evidence type="ECO:0000250" key="3">
    <source>
        <dbReference type="UniProtKB" id="P86336"/>
    </source>
</evidence>
<evidence type="ECO:0000255" key="4"/>
<evidence type="ECO:0000269" key="5">
    <source>
    </source>
</evidence>
<evidence type="ECO:0000303" key="6">
    <source>
    </source>
</evidence>
<evidence type="ECO:0000305" key="7"/>
<comment type="function">
    <text evidence="1 2">Inhibitor of lipoprotein binding to the low density lipoprotein (LDL) receptor, LDL receptor-related protein, and very low density lipoprotein (VLDL) receptor. Associates with high density lipoproteins (HDL) and the triacylglycerol-rich lipoproteins in the plasma and makes up about 10% of the protein of the VLDL and 2% of that of HDL. Appears to interfere directly with fatty acid uptake and is also the major plasma inhibitor of cholesteryl ester transfer protein (CETP). Binds free fatty acids and reduces their intracellular esterification. Modulates the interaction of APOE with beta-migrating VLDL and inhibits binding of beta-VLDL to the LDL receptor-related protein.</text>
</comment>
<comment type="subcellular location">
    <subcellularLocation>
        <location evidence="1">Secreted</location>
    </subcellularLocation>
</comment>
<comment type="mass spectrometry">
    <molecule>Apolipoprotein C-I, acidic form</molecule>
</comment>
<comment type="mass spectrometry">
    <molecule>Truncated apolipoprotein C-I, acidic form</molecule>
</comment>
<comment type="miscellaneous">
    <text evidence="6">Apolipoprotein C-I is present in acidic (APOC1A) and basic (APOC1B) forms in P.paniscus, P.abelii and P.troglodytes and perhaps also in baboons and macaques. The two genes for ApoC-I arose through a duplication process that occurred after the divergence of New World monkeys from the human lineage. In human, the acidic form has become a pseudogene sometime between the divergence of bonobos and chimpanzees from the human lineage and the appearance of the Denisovans. Pseudogenization resulted when the codon for the penultimate amino acid in the signal sequence was changed to a stop codon.</text>
</comment>
<comment type="similarity">
    <text evidence="7">Belongs to the apolipoprotein C1 family.</text>
</comment>
<sequence>MRLFLSLPVLVVVLSMVLEGPAPAQGAPDVSNPFDGLEELGKTLEDNTREFINRITQSELPAKMWDWFSETFRRVKEKLKIDS</sequence>
<feature type="signal peptide" evidence="4">
    <location>
        <begin position="1"/>
        <end position="26"/>
    </location>
</feature>
<feature type="chain" id="PRO_0000391838" description="Apolipoprotein C-I, acidic form">
    <location>
        <begin position="27"/>
        <end position="83"/>
    </location>
</feature>
<feature type="chain" id="PRO_0000391839" description="Truncated apolipoprotein C-I, acidic form" evidence="3">
    <location>
        <begin position="29"/>
        <end position="83"/>
    </location>
</feature>
<organism>
    <name type="scientific">Pongo abelii</name>
    <name type="common">Sumatran orangutan</name>
    <name type="synonym">Pongo pygmaeus abelii</name>
    <dbReference type="NCBI Taxonomy" id="9601"/>
    <lineage>
        <taxon>Eukaryota</taxon>
        <taxon>Metazoa</taxon>
        <taxon>Chordata</taxon>
        <taxon>Craniata</taxon>
        <taxon>Vertebrata</taxon>
        <taxon>Euteleostomi</taxon>
        <taxon>Mammalia</taxon>
        <taxon>Eutheria</taxon>
        <taxon>Euarchontoglires</taxon>
        <taxon>Primates</taxon>
        <taxon>Haplorrhini</taxon>
        <taxon>Catarrhini</taxon>
        <taxon>Hominidae</taxon>
        <taxon>Pongo</taxon>
    </lineage>
</organism>
<reference key="1">
    <citation type="journal article" date="2005" name="Nature">
        <title>Initial sequence of the chimpanzee genome and comparison with the human genome.</title>
        <authorList>
            <consortium name="Chimpanzee sequencing and analysis consortium"/>
        </authorList>
    </citation>
    <scope>NUCLEOTIDE SEQUENCE [LARGE SCALE GENOMIC DNA]</scope>
</reference>
<reference key="2">
    <citation type="journal article" date="2010" name="Comp. Biochem. Physiol.">
        <title>Detection of two distinct forms of apoC-I in great apes.</title>
        <authorList>
            <person name="Puppione D.L."/>
            <person name="Ryan C.M."/>
            <person name="Bassilian S."/>
            <person name="Souda P."/>
            <person name="Xiao X."/>
            <person name="Ryder O.A."/>
            <person name="Whitelegge J.P."/>
        </authorList>
    </citation>
    <scope>IDENTIFICATION</scope>
    <scope>MASS SPECTROMETRY</scope>
</reference>
<reference key="3">
    <citation type="journal article" date="2013" name="Front. Biol.">
        <title>Proteogenomic Review of the Changes in Primate apoC-I during Evolution.</title>
        <authorList>
            <person name="Puppione D."/>
            <person name="Whitelegge J.P."/>
        </authorList>
    </citation>
    <scope>REVIEW</scope>
</reference>
<reference key="4">
    <citation type="journal article" date="2014" name="Comp. Biochem. Physiol.">
        <title>Higher primates, but not New World monkeys, have a duplicate set of enhancers flanking their apoC-I genes.</title>
        <authorList>
            <person name="Puppione D.L."/>
        </authorList>
    </citation>
    <scope>GENE DUPLICATION</scope>
</reference>
<protein>
    <recommendedName>
        <fullName>Apolipoprotein C-I, acidic form</fullName>
        <shortName>Apo-CIA</shortName>
        <shortName>ApoC-IA</shortName>
    </recommendedName>
    <alternativeName>
        <fullName>Apolipoprotein C1A</fullName>
    </alternativeName>
    <component>
        <recommendedName>
            <fullName>Truncated apolipoprotein C-I, acidic form</fullName>
            <shortName>Apo-CIA'</shortName>
            <shortName>ApoC-IA'</shortName>
        </recommendedName>
    </component>
</protein>
<proteinExistence type="evidence at protein level"/>
<name>APO1A_PONAB</name>
<dbReference type="SMR" id="P0CE39"/>
<dbReference type="STRING" id="9601.ENSPPYP00000011299"/>
<dbReference type="InParanoid" id="P0CE39"/>
<dbReference type="OrthoDB" id="8941712at2759"/>
<dbReference type="Proteomes" id="UP000001595">
    <property type="component" value="Unplaced"/>
</dbReference>
<dbReference type="GO" id="GO:0034364">
    <property type="term" value="C:high-density lipoprotein particle"/>
    <property type="evidence" value="ECO:0007669"/>
    <property type="project" value="TreeGrafter"/>
</dbReference>
<dbReference type="GO" id="GO:0034361">
    <property type="term" value="C:very-low-density lipoprotein particle"/>
    <property type="evidence" value="ECO:0007669"/>
    <property type="project" value="TreeGrafter"/>
</dbReference>
<dbReference type="GO" id="GO:0005504">
    <property type="term" value="F:fatty acid binding"/>
    <property type="evidence" value="ECO:0007669"/>
    <property type="project" value="TreeGrafter"/>
</dbReference>
<dbReference type="GO" id="GO:0004859">
    <property type="term" value="F:phospholipase inhibitor activity"/>
    <property type="evidence" value="ECO:0007669"/>
    <property type="project" value="TreeGrafter"/>
</dbReference>
<dbReference type="GO" id="GO:0006869">
    <property type="term" value="P:lipid transport"/>
    <property type="evidence" value="ECO:0007669"/>
    <property type="project" value="UniProtKB-KW"/>
</dbReference>
<dbReference type="GO" id="GO:0042157">
    <property type="term" value="P:lipoprotein metabolic process"/>
    <property type="evidence" value="ECO:0007669"/>
    <property type="project" value="InterPro"/>
</dbReference>
<dbReference type="GO" id="GO:0032375">
    <property type="term" value="P:negative regulation of cholesterol transport"/>
    <property type="evidence" value="ECO:0007669"/>
    <property type="project" value="TreeGrafter"/>
</dbReference>
<dbReference type="GO" id="GO:0050995">
    <property type="term" value="P:negative regulation of lipid catabolic process"/>
    <property type="evidence" value="ECO:0007669"/>
    <property type="project" value="TreeGrafter"/>
</dbReference>
<dbReference type="GO" id="GO:0010916">
    <property type="term" value="P:negative regulation of very-low-density lipoprotein particle clearance"/>
    <property type="evidence" value="ECO:0007669"/>
    <property type="project" value="TreeGrafter"/>
</dbReference>
<dbReference type="GO" id="GO:0006641">
    <property type="term" value="P:triglyceride metabolic process"/>
    <property type="evidence" value="ECO:0007669"/>
    <property type="project" value="TreeGrafter"/>
</dbReference>
<dbReference type="GO" id="GO:0034447">
    <property type="term" value="P:very-low-density lipoprotein particle clearance"/>
    <property type="evidence" value="ECO:0007669"/>
    <property type="project" value="TreeGrafter"/>
</dbReference>
<dbReference type="Gene3D" id="4.10.260.30">
    <property type="entry name" value="Apolipoprotein C-I"/>
    <property type="match status" value="1"/>
</dbReference>
<dbReference type="InterPro" id="IPR043081">
    <property type="entry name" value="ApoC-1_sf"/>
</dbReference>
<dbReference type="InterPro" id="IPR006781">
    <property type="entry name" value="ApoC-I"/>
</dbReference>
<dbReference type="PANTHER" id="PTHR16565">
    <property type="entry name" value="APOLIPOPROTEIN C-I"/>
    <property type="match status" value="1"/>
</dbReference>
<dbReference type="PANTHER" id="PTHR16565:SF3">
    <property type="entry name" value="APOLIPOPROTEIN C-I, ACIDIC FORM"/>
    <property type="match status" value="1"/>
</dbReference>
<dbReference type="Pfam" id="PF04691">
    <property type="entry name" value="ApoC-I"/>
    <property type="match status" value="1"/>
</dbReference>